<gene>
    <name evidence="1" type="primary">smg</name>
    <name type="ordered locus">SeSA_A3601</name>
</gene>
<comment type="similarity">
    <text evidence="1">Belongs to the Smg family.</text>
</comment>
<proteinExistence type="inferred from homology"/>
<organism>
    <name type="scientific">Salmonella schwarzengrund (strain CVM19633)</name>
    <dbReference type="NCBI Taxonomy" id="439843"/>
    <lineage>
        <taxon>Bacteria</taxon>
        <taxon>Pseudomonadati</taxon>
        <taxon>Pseudomonadota</taxon>
        <taxon>Gammaproteobacteria</taxon>
        <taxon>Enterobacterales</taxon>
        <taxon>Enterobacteriaceae</taxon>
        <taxon>Salmonella</taxon>
    </lineage>
</organism>
<accession>B4TXA8</accession>
<name>SMG_SALSV</name>
<reference key="1">
    <citation type="journal article" date="2011" name="J. Bacteriol.">
        <title>Comparative genomics of 28 Salmonella enterica isolates: evidence for CRISPR-mediated adaptive sublineage evolution.</title>
        <authorList>
            <person name="Fricke W.F."/>
            <person name="Mammel M.K."/>
            <person name="McDermott P.F."/>
            <person name="Tartera C."/>
            <person name="White D.G."/>
            <person name="Leclerc J.E."/>
            <person name="Ravel J."/>
            <person name="Cebula T.A."/>
        </authorList>
    </citation>
    <scope>NUCLEOTIDE SEQUENCE [LARGE SCALE GENOMIC DNA]</scope>
    <source>
        <strain>CVM19633</strain>
    </source>
</reference>
<sequence length="157" mass="18540">MFDVLMYLFETYIHNEAELRVDQDRLERDLTDAGFDREDIYNALLWLEKLADYQDGLAEPMQLASDPLSMRIYTVEECERLDASCRGFLLFLEQIQVLNLETREMVIERVLALDTAEFDLEDLKWVILMVLFNIPGCENAYQQMEELLFEVNEGMLH</sequence>
<evidence type="ECO:0000255" key="1">
    <source>
        <dbReference type="HAMAP-Rule" id="MF_00598"/>
    </source>
</evidence>
<dbReference type="EMBL" id="CP001127">
    <property type="protein sequence ID" value="ACF90783.1"/>
    <property type="molecule type" value="Genomic_DNA"/>
</dbReference>
<dbReference type="RefSeq" id="WP_000460663.1">
    <property type="nucleotide sequence ID" value="NC_011094.1"/>
</dbReference>
<dbReference type="SMR" id="B4TXA8"/>
<dbReference type="KEGG" id="sew:SeSA_A3601"/>
<dbReference type="HOGENOM" id="CLU_133242_0_0_6"/>
<dbReference type="Proteomes" id="UP000001865">
    <property type="component" value="Chromosome"/>
</dbReference>
<dbReference type="HAMAP" id="MF_00598">
    <property type="entry name" value="Smg"/>
    <property type="match status" value="1"/>
</dbReference>
<dbReference type="InterPro" id="IPR007456">
    <property type="entry name" value="Smg"/>
</dbReference>
<dbReference type="NCBIfam" id="NF002897">
    <property type="entry name" value="PRK03430.1"/>
    <property type="match status" value="1"/>
</dbReference>
<dbReference type="PANTHER" id="PTHR38692">
    <property type="entry name" value="PROTEIN SMG"/>
    <property type="match status" value="1"/>
</dbReference>
<dbReference type="PANTHER" id="PTHR38692:SF1">
    <property type="entry name" value="PROTEIN SMG"/>
    <property type="match status" value="1"/>
</dbReference>
<dbReference type="Pfam" id="PF04361">
    <property type="entry name" value="DUF494"/>
    <property type="match status" value="1"/>
</dbReference>
<protein>
    <recommendedName>
        <fullName evidence="1">Protein Smg</fullName>
    </recommendedName>
</protein>
<feature type="chain" id="PRO_1000129904" description="Protein Smg">
    <location>
        <begin position="1"/>
        <end position="157"/>
    </location>
</feature>